<gene>
    <name evidence="7" type="primary">mig-18</name>
    <name evidence="7" type="ORF">F11F1.6</name>
</gene>
<organism evidence="6">
    <name type="scientific">Caenorhabditis elegans</name>
    <dbReference type="NCBI Taxonomy" id="6239"/>
    <lineage>
        <taxon>Eukaryota</taxon>
        <taxon>Metazoa</taxon>
        <taxon>Ecdysozoa</taxon>
        <taxon>Nematoda</taxon>
        <taxon>Chromadorea</taxon>
        <taxon>Rhabditida</taxon>
        <taxon>Rhabditina</taxon>
        <taxon>Rhabditomorpha</taxon>
        <taxon>Rhabditoidea</taxon>
        <taxon>Rhabditidae</taxon>
        <taxon>Peloderinae</taxon>
        <taxon>Caenorhabditis</taxon>
    </lineage>
</organism>
<feature type="signal peptide" evidence="1">
    <location>
        <begin position="1"/>
        <end position="19"/>
    </location>
</feature>
<feature type="chain" id="PRO_5004159167" description="Abnormal cell migration protein 18" evidence="1">
    <location>
        <begin position="20"/>
        <end position="228"/>
    </location>
</feature>
<feature type="glycosylation site" description="N-linked (GlcNAc...) asparagine" evidence="2">
    <location>
        <position position="135"/>
    </location>
</feature>
<feature type="glycosylation site" description="N-linked (GlcNAc...) asparagine" evidence="2">
    <location>
        <position position="159"/>
    </location>
</feature>
<feature type="mutagenesis site" description="In tk35; abnormal distal tip cell migration after the first turn during gonad morphogenesis." evidence="4">
    <original>C</original>
    <variation>R</variation>
    <location>
        <position position="21"/>
    </location>
</feature>
<feature type="mutagenesis site" description="In gm321; abnormal distal tip cell migration after the first turn during gonad morphogenesis." evidence="4">
    <location>
        <begin position="209"/>
        <end position="228"/>
    </location>
</feature>
<feature type="mutagenesis site" description="In k140; abnormal posterior, and to a lesser extent anterior, distal tip cell (DTC) migration after the first turn during gonad morphogenesis. Reduced localization of fibulin fbl-1 to the gonad basement membrane. Anterior DTC migration is more severely affected in a mig-17 (k174) or nid-1 (cg119) mutant background. Normal DTC migration is restored in a fib-1 (k201 or k206) or let-2 (k196) mutant background." evidence="3 4">
    <location>
        <begin position="214"/>
        <end position="228"/>
    </location>
</feature>
<sequence>MTFTLRLLVLCTVYSYVISQCDDNGVIYTNGDKWIRNNHFLVTCRDGNIQTLKCVTDSGHLLEVGSKSYVENGYEYMCAREVTDNLNTNTCPTFADFSDDIFKDRFAICCISRRFKGCVDANGDIVKSGFFVIGNKSLKYCRIQANQLQARIEPKGCFNGTEKDDVNDEELHIKKYAVWREGDIEYRCGDDGVHIQRCFPPELKKKAIWAGTAWIQEDGQVKTCGKIN</sequence>
<name>MIG18_CAEEL</name>
<evidence type="ECO:0000255" key="1"/>
<evidence type="ECO:0000255" key="2">
    <source>
        <dbReference type="PROSITE-ProRule" id="PRU00498"/>
    </source>
</evidence>
<evidence type="ECO:0000269" key="3">
    <source>
    </source>
</evidence>
<evidence type="ECO:0000269" key="4">
    <source>
    </source>
</evidence>
<evidence type="ECO:0000305" key="5"/>
<evidence type="ECO:0000312" key="6">
    <source>
        <dbReference type="Proteomes" id="UP000001940"/>
    </source>
</evidence>
<evidence type="ECO:0000312" key="7">
    <source>
        <dbReference type="WormBase" id="F11F1.6"/>
    </source>
</evidence>
<comment type="function">
    <text evidence="3 4">Required for the directional control of distal tip cell migration during gonadogenesis, probably by recruiting fibulin fbl-1 to the gonad basement membrane.</text>
</comment>
<comment type="subcellular location">
    <subcellularLocation>
        <location evidence="4">Secreted</location>
        <location evidence="4">Extracellular space</location>
        <location evidence="4">Extracellular matrix</location>
        <location evidence="4">Basement membrane</location>
    </subcellularLocation>
    <text evidence="4">Colocalizes with metalloprotease mig-17 to the gonad basement membrane.</text>
</comment>
<comment type="tissue specificity">
    <text evidence="4">Expressed in body wall muscle.</text>
</comment>
<dbReference type="EMBL" id="BX284603">
    <property type="protein sequence ID" value="CAB02928.2"/>
    <property type="molecule type" value="Genomic_DNA"/>
</dbReference>
<dbReference type="PIR" id="T20793">
    <property type="entry name" value="T20793"/>
</dbReference>
<dbReference type="RefSeq" id="NP_499766.2">
    <property type="nucleotide sequence ID" value="NM_067365.5"/>
</dbReference>
<dbReference type="SMR" id="O45348"/>
<dbReference type="FunCoup" id="O45348">
    <property type="interactions" value="266"/>
</dbReference>
<dbReference type="STRING" id="6239.F11F1.6.1"/>
<dbReference type="GlyCosmos" id="O45348">
    <property type="glycosylation" value="2 sites, No reported glycans"/>
</dbReference>
<dbReference type="PaxDb" id="6239-F11F1.6"/>
<dbReference type="PeptideAtlas" id="O45348"/>
<dbReference type="EnsemblMetazoa" id="F11F1.6.1">
    <property type="protein sequence ID" value="F11F1.6.1"/>
    <property type="gene ID" value="WBGene00003249"/>
</dbReference>
<dbReference type="GeneID" id="184362"/>
<dbReference type="KEGG" id="cel:CELE_F11F1.6"/>
<dbReference type="UCSC" id="F11F1.6">
    <property type="organism name" value="c. elegans"/>
</dbReference>
<dbReference type="AGR" id="WB:WBGene00003249"/>
<dbReference type="CTD" id="184362"/>
<dbReference type="WormBase" id="F11F1.6">
    <property type="protein sequence ID" value="CE33613"/>
    <property type="gene ID" value="WBGene00003249"/>
    <property type="gene designation" value="mig-18"/>
</dbReference>
<dbReference type="eggNOG" id="ENOG502S5V8">
    <property type="taxonomic scope" value="Eukaryota"/>
</dbReference>
<dbReference type="HOGENOM" id="CLU_1215758_0_0_1"/>
<dbReference type="InParanoid" id="O45348"/>
<dbReference type="OMA" id="WENDIEY"/>
<dbReference type="OrthoDB" id="5817707at2759"/>
<dbReference type="PRO" id="PR:O45348"/>
<dbReference type="Proteomes" id="UP000001940">
    <property type="component" value="Chromosome III"/>
</dbReference>
<dbReference type="Bgee" id="WBGene00003249">
    <property type="expression patterns" value="Expressed in larva and 3 other cell types or tissues"/>
</dbReference>
<dbReference type="GO" id="GO:0005604">
    <property type="term" value="C:basement membrane"/>
    <property type="evidence" value="ECO:0007669"/>
    <property type="project" value="UniProtKB-SubCell"/>
</dbReference>
<dbReference type="GO" id="GO:0005576">
    <property type="term" value="C:extracellular region"/>
    <property type="evidence" value="ECO:0007669"/>
    <property type="project" value="UniProtKB-KW"/>
</dbReference>
<dbReference type="InterPro" id="IPR040282">
    <property type="entry name" value="Mig-18-like"/>
</dbReference>
<dbReference type="InterPro" id="IPR055119">
    <property type="entry name" value="Mig18_Fn1"/>
</dbReference>
<dbReference type="PANTHER" id="PTHR35572:SF3">
    <property type="entry name" value="ABNORMAL CELL MIGRATION PROTEIN 18"/>
    <property type="match status" value="1"/>
</dbReference>
<dbReference type="PANTHER" id="PTHR35572">
    <property type="entry name" value="PROTEIN CBG04538-RELATED"/>
    <property type="match status" value="1"/>
</dbReference>
<dbReference type="Pfam" id="PF23003">
    <property type="entry name" value="Fn1_2"/>
    <property type="match status" value="1"/>
</dbReference>
<keyword id="KW-0084">Basement membrane</keyword>
<keyword id="KW-0217">Developmental protein</keyword>
<keyword id="KW-0272">Extracellular matrix</keyword>
<keyword id="KW-0325">Glycoprotein</keyword>
<keyword id="KW-1185">Reference proteome</keyword>
<keyword id="KW-0964">Secreted</keyword>
<keyword id="KW-0732">Signal</keyword>
<proteinExistence type="evidence at protein level"/>
<reference evidence="6" key="1">
    <citation type="journal article" date="1998" name="Science">
        <title>Genome sequence of the nematode C. elegans: a platform for investigating biology.</title>
        <authorList>
            <consortium name="The C. elegans sequencing consortium"/>
        </authorList>
    </citation>
    <scope>NUCLEOTIDE SEQUENCE [LARGE SCALE GENOMIC DNA]</scope>
    <source>
        <strain evidence="6">Bristol N2</strain>
    </source>
</reference>
<reference evidence="5" key="2">
    <citation type="journal article" date="1999" name="Genetics">
        <title>Mutations affecting symmetrical migration of distal tip cells in Caenorhabditis elegans.</title>
        <authorList>
            <person name="Nishiwaki K."/>
        </authorList>
    </citation>
    <scope>FUNCTION</scope>
    <scope>MUTAGENESIS OF 214-TRP--ASN-228</scope>
</reference>
<reference evidence="5" key="3">
    <citation type="journal article" date="2014" name="Genetics">
        <title>The novel secreted factor MIG-18 acts with MIG-17/ADAMTS to control cell migration in Caenorhabditis elegans.</title>
        <authorList>
            <person name="Kim H.S."/>
            <person name="Kitano Y."/>
            <person name="Mori M."/>
            <person name="Takano T."/>
            <person name="Harbaugh T.E."/>
            <person name="Mizutani K."/>
            <person name="Yanagimoto H."/>
            <person name="Miwa S."/>
            <person name="Ihara S."/>
            <person name="Kubota Y."/>
            <person name="Shibata Y."/>
            <person name="Ikenishi K."/>
            <person name="Garriga G."/>
            <person name="Nishiwaki K."/>
        </authorList>
    </citation>
    <scope>FUNCTION</scope>
    <scope>SUBCELLULAR LOCATION</scope>
    <scope>TISSUE SPECIFICITY</scope>
    <scope>MUTAGENESIS OF CYS-21 AND 209-TRP--ASN-228</scope>
</reference>
<protein>
    <recommendedName>
        <fullName evidence="7">Abnormal cell migration protein 18</fullName>
    </recommendedName>
</protein>
<accession>O45348</accession>